<dbReference type="SMR" id="P85961"/>
<proteinExistence type="evidence at protein level"/>
<evidence type="ECO:0000303" key="1">
    <source>
    </source>
</evidence>
<reference key="1">
    <citation type="journal article" date="2008" name="J. Proteomics">
        <title>A proteomics approach to identify proteins differentially expressed in Douglas-fir seedlings infected by Phellinus sulphurascens.</title>
        <authorList>
            <person name="Islam M.A."/>
            <person name="Sturrock R.N."/>
            <person name="Ekramoddoullah A.K.M."/>
        </authorList>
    </citation>
    <scope>IDENTIFICATION BY MASS SPECTROMETRY</scope>
</reference>
<accession>P85961</accession>
<sequence>RQRRRRIKARRRIKRWRRRRIERRRWIEHATADR</sequence>
<feature type="chain" id="PRO_0000347292" description="Unknown protein 5">
    <location>
        <begin position="1" status="less than"/>
        <end position="34" status="greater than"/>
    </location>
</feature>
<feature type="non-consecutive residues" evidence="1">
    <location>
        <begin position="23"/>
        <end position="24"/>
    </location>
</feature>
<feature type="non-terminal residue" evidence="1">
    <location>
        <position position="1"/>
    </location>
</feature>
<feature type="non-terminal residue" evidence="1">
    <location>
        <position position="34"/>
    </location>
</feature>
<organism>
    <name type="scientific">Pseudotsuga menziesii</name>
    <name type="common">Douglas-fir</name>
    <name type="synonym">Abies menziesii</name>
    <dbReference type="NCBI Taxonomy" id="3357"/>
    <lineage>
        <taxon>Eukaryota</taxon>
        <taxon>Viridiplantae</taxon>
        <taxon>Streptophyta</taxon>
        <taxon>Embryophyta</taxon>
        <taxon>Tracheophyta</taxon>
        <taxon>Spermatophyta</taxon>
        <taxon>Pinopsida</taxon>
        <taxon>Pinidae</taxon>
        <taxon>Conifers I</taxon>
        <taxon>Pinales</taxon>
        <taxon>Pinaceae</taxon>
        <taxon>Pseudotsuga</taxon>
    </lineage>
</organism>
<name>UP05_PSEMZ</name>
<protein>
    <recommendedName>
        <fullName>Unknown protein 5</fullName>
    </recommendedName>
</protein>